<organism>
    <name type="scientific">Methanococcus maripaludis (strain C5 / ATCC BAA-1333)</name>
    <dbReference type="NCBI Taxonomy" id="402880"/>
    <lineage>
        <taxon>Archaea</taxon>
        <taxon>Methanobacteriati</taxon>
        <taxon>Methanobacteriota</taxon>
        <taxon>Methanomada group</taxon>
        <taxon>Methanococci</taxon>
        <taxon>Methanococcales</taxon>
        <taxon>Methanococcaceae</taxon>
        <taxon>Methanococcus</taxon>
    </lineage>
</organism>
<evidence type="ECO:0000255" key="1">
    <source>
        <dbReference type="HAMAP-Rule" id="MF_00284"/>
    </source>
</evidence>
<comment type="catalytic activity">
    <reaction evidence="1">
        <text>tRNA(Phe) + L-phenylalanine + ATP = L-phenylalanyl-tRNA(Phe) + AMP + diphosphate + H(+)</text>
        <dbReference type="Rhea" id="RHEA:19413"/>
        <dbReference type="Rhea" id="RHEA-COMP:9668"/>
        <dbReference type="Rhea" id="RHEA-COMP:9699"/>
        <dbReference type="ChEBI" id="CHEBI:15378"/>
        <dbReference type="ChEBI" id="CHEBI:30616"/>
        <dbReference type="ChEBI" id="CHEBI:33019"/>
        <dbReference type="ChEBI" id="CHEBI:58095"/>
        <dbReference type="ChEBI" id="CHEBI:78442"/>
        <dbReference type="ChEBI" id="CHEBI:78531"/>
        <dbReference type="ChEBI" id="CHEBI:456215"/>
        <dbReference type="EC" id="6.1.1.20"/>
    </reaction>
</comment>
<comment type="cofactor">
    <cofactor evidence="1">
        <name>Mg(2+)</name>
        <dbReference type="ChEBI" id="CHEBI:18420"/>
    </cofactor>
</comment>
<comment type="subunit">
    <text evidence="1">Tetramer of two alpha and two beta subunits.</text>
</comment>
<comment type="subcellular location">
    <subcellularLocation>
        <location evidence="1">Cytoplasm</location>
    </subcellularLocation>
</comment>
<comment type="similarity">
    <text evidence="1">Belongs to the phenylalanyl-tRNA synthetase beta subunit family. Type 2 subfamily.</text>
</comment>
<proteinExistence type="inferred from homology"/>
<keyword id="KW-0030">Aminoacyl-tRNA synthetase</keyword>
<keyword id="KW-0067">ATP-binding</keyword>
<keyword id="KW-0963">Cytoplasm</keyword>
<keyword id="KW-0436">Ligase</keyword>
<keyword id="KW-0460">Magnesium</keyword>
<keyword id="KW-0479">Metal-binding</keyword>
<keyword id="KW-0547">Nucleotide-binding</keyword>
<keyword id="KW-0648">Protein biosynthesis</keyword>
<feature type="chain" id="PRO_1000022422" description="Phenylalanine--tRNA ligase beta subunit">
    <location>
        <begin position="1"/>
        <end position="554"/>
    </location>
</feature>
<feature type="domain" description="B5" evidence="1">
    <location>
        <begin position="276"/>
        <end position="351"/>
    </location>
</feature>
<feature type="binding site" evidence="1">
    <location>
        <position position="329"/>
    </location>
    <ligand>
        <name>Mg(2+)</name>
        <dbReference type="ChEBI" id="CHEBI:18420"/>
        <note>shared with alpha subunit</note>
    </ligand>
</feature>
<feature type="binding site" evidence="1">
    <location>
        <position position="335"/>
    </location>
    <ligand>
        <name>Mg(2+)</name>
        <dbReference type="ChEBI" id="CHEBI:18420"/>
        <note>shared with alpha subunit</note>
    </ligand>
</feature>
<feature type="binding site" evidence="1">
    <location>
        <position position="338"/>
    </location>
    <ligand>
        <name>Mg(2+)</name>
        <dbReference type="ChEBI" id="CHEBI:18420"/>
        <note>shared with alpha subunit</note>
    </ligand>
</feature>
<feature type="binding site" evidence="1">
    <location>
        <position position="339"/>
    </location>
    <ligand>
        <name>Mg(2+)</name>
        <dbReference type="ChEBI" id="CHEBI:18420"/>
        <note>shared with alpha subunit</note>
    </ligand>
</feature>
<accession>A4FWS3</accession>
<sequence>MPTINVNKVDLERLSNISLSDKIIEDRFPMMGVEVEEIFEEVDKNGKKQKMVQFSINPDRPDYLSVEGLARGFRGFMGITTGIQEFEVLNSDIKVIVEENETRPYVAFALVKNVLMDEFVLESMINLQEKLHWAIGRDRKKLAIGIHDFDKVKAPFTYKEIKGDEIKFVPLGYEDEKMTPREIIEKHEKGIKYAHLIQNDKFPIIVDANGEVLSMPPIINGTLTKVTPTSKNLLIDITGTEKEAVEETLNIIVCALAERRGTIVSVDVNGKKYPDLSLKSRMISVESINKKLGLELNPGEMIQAVKKSGMDALYEDGNLIVKIPAYRNDILHNVDLKEEIAINYGYEKFEGKLPSVATTGSKDPVEKKCNAMSDLMIGLGFYEVMNLTLSNQDTLFEKMNLKVEEKDYIEVLKPASIEHRVLRTSILPLLLETLYINKHHSLPQKIFEIGDCVVIDENDTETDTKCKNIKKIAGAITHPLTNFNEIKSSTEALLREFFEDFEFENYEHPAFIPGRCAKIIKDGKEVGFFGEIHPEVILNFELEHPIVGFEITIE</sequence>
<reference key="1">
    <citation type="submission" date="2007-03" db="EMBL/GenBank/DDBJ databases">
        <title>Complete sequence of chromosome of Methanococcus maripaludis C5.</title>
        <authorList>
            <consortium name="US DOE Joint Genome Institute"/>
            <person name="Copeland A."/>
            <person name="Lucas S."/>
            <person name="Lapidus A."/>
            <person name="Barry K."/>
            <person name="Glavina del Rio T."/>
            <person name="Dalin E."/>
            <person name="Tice H."/>
            <person name="Pitluck S."/>
            <person name="Chertkov O."/>
            <person name="Brettin T."/>
            <person name="Bruce D."/>
            <person name="Han C."/>
            <person name="Detter J.C."/>
            <person name="Schmutz J."/>
            <person name="Larimer F."/>
            <person name="Land M."/>
            <person name="Hauser L."/>
            <person name="Kyrpides N."/>
            <person name="Mikhailova N."/>
            <person name="Sieprawska-Lupa M."/>
            <person name="Whitman W.B."/>
            <person name="Richardson P."/>
        </authorList>
    </citation>
    <scope>NUCLEOTIDE SEQUENCE [LARGE SCALE GENOMIC DNA]</scope>
    <source>
        <strain>C5 / ATCC BAA-1333</strain>
    </source>
</reference>
<name>SYFB_METM5</name>
<gene>
    <name evidence="1" type="primary">pheT</name>
    <name type="ordered locus">MmarC5_0336</name>
</gene>
<dbReference type="EC" id="6.1.1.20" evidence="1"/>
<dbReference type="EMBL" id="CP000609">
    <property type="protein sequence ID" value="ABO34652.1"/>
    <property type="molecule type" value="Genomic_DNA"/>
</dbReference>
<dbReference type="RefSeq" id="WP_011868107.1">
    <property type="nucleotide sequence ID" value="NC_009135.1"/>
</dbReference>
<dbReference type="SMR" id="A4FWS3"/>
<dbReference type="STRING" id="402880.MmarC5_0336"/>
<dbReference type="GeneID" id="4929353"/>
<dbReference type="KEGG" id="mmq:MmarC5_0336"/>
<dbReference type="eggNOG" id="arCOG00412">
    <property type="taxonomic scope" value="Archaea"/>
</dbReference>
<dbReference type="HOGENOM" id="CLU_020279_3_0_2"/>
<dbReference type="OrthoDB" id="10073at2157"/>
<dbReference type="Proteomes" id="UP000000253">
    <property type="component" value="Chromosome"/>
</dbReference>
<dbReference type="GO" id="GO:0009328">
    <property type="term" value="C:phenylalanine-tRNA ligase complex"/>
    <property type="evidence" value="ECO:0007669"/>
    <property type="project" value="TreeGrafter"/>
</dbReference>
<dbReference type="GO" id="GO:0005524">
    <property type="term" value="F:ATP binding"/>
    <property type="evidence" value="ECO:0007669"/>
    <property type="project" value="UniProtKB-UniRule"/>
</dbReference>
<dbReference type="GO" id="GO:0000287">
    <property type="term" value="F:magnesium ion binding"/>
    <property type="evidence" value="ECO:0007669"/>
    <property type="project" value="InterPro"/>
</dbReference>
<dbReference type="GO" id="GO:0004826">
    <property type="term" value="F:phenylalanine-tRNA ligase activity"/>
    <property type="evidence" value="ECO:0007669"/>
    <property type="project" value="UniProtKB-UniRule"/>
</dbReference>
<dbReference type="GO" id="GO:0003723">
    <property type="term" value="F:RNA binding"/>
    <property type="evidence" value="ECO:0007669"/>
    <property type="project" value="InterPro"/>
</dbReference>
<dbReference type="GO" id="GO:0006432">
    <property type="term" value="P:phenylalanyl-tRNA aminoacylation"/>
    <property type="evidence" value="ECO:0007669"/>
    <property type="project" value="UniProtKB-UniRule"/>
</dbReference>
<dbReference type="CDD" id="cd00769">
    <property type="entry name" value="PheRS_beta_core"/>
    <property type="match status" value="1"/>
</dbReference>
<dbReference type="FunFam" id="3.50.40.10:FF:000003">
    <property type="entry name" value="Phenylalanine--tRNA ligase beta subunit"/>
    <property type="match status" value="1"/>
</dbReference>
<dbReference type="Gene3D" id="3.30.56.10">
    <property type="match status" value="2"/>
</dbReference>
<dbReference type="Gene3D" id="3.30.930.10">
    <property type="entry name" value="Bira Bifunctional Protein, Domain 2"/>
    <property type="match status" value="1"/>
</dbReference>
<dbReference type="Gene3D" id="3.50.40.10">
    <property type="entry name" value="Phenylalanyl-trna Synthetase, Chain B, domain 3"/>
    <property type="match status" value="1"/>
</dbReference>
<dbReference type="HAMAP" id="MF_00284">
    <property type="entry name" value="Phe_tRNA_synth_beta2"/>
    <property type="match status" value="1"/>
</dbReference>
<dbReference type="InterPro" id="IPR045864">
    <property type="entry name" value="aa-tRNA-synth_II/BPL/LPL"/>
</dbReference>
<dbReference type="InterPro" id="IPR005146">
    <property type="entry name" value="B3/B4_tRNA-bd"/>
</dbReference>
<dbReference type="InterPro" id="IPR009061">
    <property type="entry name" value="DNA-bd_dom_put_sf"/>
</dbReference>
<dbReference type="InterPro" id="IPR045060">
    <property type="entry name" value="Phe-tRNA-ligase_IIc_bsu"/>
</dbReference>
<dbReference type="InterPro" id="IPR004531">
    <property type="entry name" value="Phe-tRNA-synth_IIc_bsu_arc_euk"/>
</dbReference>
<dbReference type="InterPro" id="IPR020825">
    <property type="entry name" value="Phe-tRNA_synthase-like_B3/B4"/>
</dbReference>
<dbReference type="InterPro" id="IPR022918">
    <property type="entry name" value="Phe_tRNA_ligase_beta2_arc"/>
</dbReference>
<dbReference type="InterPro" id="IPR041616">
    <property type="entry name" value="PheRS_beta_core"/>
</dbReference>
<dbReference type="InterPro" id="IPR040659">
    <property type="entry name" value="PhetRS_B1"/>
</dbReference>
<dbReference type="InterPro" id="IPR005147">
    <property type="entry name" value="tRNA_synthase_B5-dom"/>
</dbReference>
<dbReference type="NCBIfam" id="TIGR00471">
    <property type="entry name" value="pheT_arch"/>
    <property type="match status" value="1"/>
</dbReference>
<dbReference type="PANTHER" id="PTHR10947:SF0">
    <property type="entry name" value="PHENYLALANINE--TRNA LIGASE BETA SUBUNIT"/>
    <property type="match status" value="1"/>
</dbReference>
<dbReference type="PANTHER" id="PTHR10947">
    <property type="entry name" value="PHENYLALANYL-TRNA SYNTHETASE BETA CHAIN AND LEUCINE-RICH REPEAT-CONTAINING PROTEIN 47"/>
    <property type="match status" value="1"/>
</dbReference>
<dbReference type="Pfam" id="PF03483">
    <property type="entry name" value="B3_4"/>
    <property type="match status" value="1"/>
</dbReference>
<dbReference type="Pfam" id="PF03484">
    <property type="entry name" value="B5"/>
    <property type="match status" value="1"/>
</dbReference>
<dbReference type="Pfam" id="PF18262">
    <property type="entry name" value="PhetRS_B1"/>
    <property type="match status" value="1"/>
</dbReference>
<dbReference type="Pfam" id="PF17759">
    <property type="entry name" value="tRNA_synthFbeta"/>
    <property type="match status" value="1"/>
</dbReference>
<dbReference type="SMART" id="SM00873">
    <property type="entry name" value="B3_4"/>
    <property type="match status" value="1"/>
</dbReference>
<dbReference type="SMART" id="SM00874">
    <property type="entry name" value="B5"/>
    <property type="match status" value="1"/>
</dbReference>
<dbReference type="SUPFAM" id="SSF55681">
    <property type="entry name" value="Class II aaRS and biotin synthetases"/>
    <property type="match status" value="1"/>
</dbReference>
<dbReference type="SUPFAM" id="SSF46955">
    <property type="entry name" value="Putative DNA-binding domain"/>
    <property type="match status" value="2"/>
</dbReference>
<dbReference type="PROSITE" id="PS51483">
    <property type="entry name" value="B5"/>
    <property type="match status" value="1"/>
</dbReference>
<protein>
    <recommendedName>
        <fullName evidence="1">Phenylalanine--tRNA ligase beta subunit</fullName>
        <ecNumber evidence="1">6.1.1.20</ecNumber>
    </recommendedName>
    <alternativeName>
        <fullName evidence="1">Phenylalanyl-tRNA synthetase beta subunit</fullName>
        <shortName evidence="1">PheRS</shortName>
    </alternativeName>
</protein>